<evidence type="ECO:0000255" key="1">
    <source>
        <dbReference type="HAMAP-Rule" id="MF_01236"/>
    </source>
</evidence>
<evidence type="ECO:0000256" key="2">
    <source>
        <dbReference type="SAM" id="MobiDB-lite"/>
    </source>
</evidence>
<proteinExistence type="inferred from homology"/>
<protein>
    <recommendedName>
        <fullName evidence="1">HTH-type transcriptional repressor NanR</fullName>
    </recommendedName>
</protein>
<sequence length="263" mass="29494">MGLMNAFDSQTEDSSPAIGRNLRSRPLARKKLSEMVEEELEQMIRRREFGEGEQLPSERELMAFFNVGRPSVREALAALKRKGLVQINNGERARVSRPSADTIIGELSGMAKDFLSHPGGIAHFEQLRLFFESSLVRYAAEHATDEQIDLLAKALEINSQSLDNNAAFIRSDVDFHRVLAEIPGNPIFMAIHVALLDWLIAARPTVADQALHEHNNVSYQQHIAIVDAIRRHDPDEADRALQSHLNSVSATWHAFGQTTNKKK</sequence>
<accession>Q8X4W4</accession>
<keyword id="KW-0238">DNA-binding</keyword>
<keyword id="KW-1185">Reference proteome</keyword>
<keyword id="KW-0678">Repressor</keyword>
<keyword id="KW-0804">Transcription</keyword>
<keyword id="KW-0805">Transcription regulation</keyword>
<comment type="function">
    <text evidence="1">Transcriptional repressor that controls expression of the genes required for the catabolism of sialic acids.</text>
</comment>
<comment type="similarity">
    <text evidence="1">Belongs to the NanR family.</text>
</comment>
<gene>
    <name evidence="1" type="primary">nanR</name>
    <name type="ordered locus">Z4584</name>
    <name type="ordered locus">ECs4099</name>
</gene>
<dbReference type="EMBL" id="AE005174">
    <property type="protein sequence ID" value="AAG58354.1"/>
    <property type="molecule type" value="Genomic_DNA"/>
</dbReference>
<dbReference type="EMBL" id="BA000007">
    <property type="protein sequence ID" value="BAB37522.1"/>
    <property type="molecule type" value="Genomic_DNA"/>
</dbReference>
<dbReference type="PIR" id="C91141">
    <property type="entry name" value="C91141"/>
</dbReference>
<dbReference type="PIR" id="F85986">
    <property type="entry name" value="F85986"/>
</dbReference>
<dbReference type="RefSeq" id="NP_312126.3">
    <property type="nucleotide sequence ID" value="NC_002695.1"/>
</dbReference>
<dbReference type="RefSeq" id="WP_000523844.1">
    <property type="nucleotide sequence ID" value="NZ_VOAI01000014.1"/>
</dbReference>
<dbReference type="SMR" id="Q8X4W4"/>
<dbReference type="STRING" id="155864.Z4584"/>
<dbReference type="GeneID" id="75173394"/>
<dbReference type="GeneID" id="916052"/>
<dbReference type="KEGG" id="ece:Z4584"/>
<dbReference type="KEGG" id="ecs:ECs_4099"/>
<dbReference type="PATRIC" id="fig|386585.9.peg.4279"/>
<dbReference type="eggNOG" id="COG2186">
    <property type="taxonomic scope" value="Bacteria"/>
</dbReference>
<dbReference type="HOGENOM" id="CLU_017584_9_1_6"/>
<dbReference type="OMA" id="QMVSNPI"/>
<dbReference type="Proteomes" id="UP000000558">
    <property type="component" value="Chromosome"/>
</dbReference>
<dbReference type="Proteomes" id="UP000002519">
    <property type="component" value="Chromosome"/>
</dbReference>
<dbReference type="GO" id="GO:0003677">
    <property type="term" value="F:DNA binding"/>
    <property type="evidence" value="ECO:0007669"/>
    <property type="project" value="UniProtKB-KW"/>
</dbReference>
<dbReference type="GO" id="GO:0003700">
    <property type="term" value="F:DNA-binding transcription factor activity"/>
    <property type="evidence" value="ECO:0007669"/>
    <property type="project" value="UniProtKB-UniRule"/>
</dbReference>
<dbReference type="GO" id="GO:0045892">
    <property type="term" value="P:negative regulation of DNA-templated transcription"/>
    <property type="evidence" value="ECO:0007669"/>
    <property type="project" value="UniProtKB-UniRule"/>
</dbReference>
<dbReference type="CDD" id="cd07377">
    <property type="entry name" value="WHTH_GntR"/>
    <property type="match status" value="1"/>
</dbReference>
<dbReference type="FunFam" id="1.10.10.10:FF:000150">
    <property type="entry name" value="HTH-type transcriptional repressor NanR"/>
    <property type="match status" value="1"/>
</dbReference>
<dbReference type="FunFam" id="1.20.120.530:FF:000006">
    <property type="entry name" value="HTH-type transcriptional repressor NanR"/>
    <property type="match status" value="1"/>
</dbReference>
<dbReference type="Gene3D" id="1.20.120.530">
    <property type="entry name" value="GntR ligand-binding domain-like"/>
    <property type="match status" value="1"/>
</dbReference>
<dbReference type="Gene3D" id="1.10.10.10">
    <property type="entry name" value="Winged helix-like DNA-binding domain superfamily/Winged helix DNA-binding domain"/>
    <property type="match status" value="1"/>
</dbReference>
<dbReference type="HAMAP" id="MF_01236">
    <property type="entry name" value="HTH_NanR"/>
    <property type="match status" value="1"/>
</dbReference>
<dbReference type="InterPro" id="IPR011711">
    <property type="entry name" value="GntR_C"/>
</dbReference>
<dbReference type="InterPro" id="IPR008920">
    <property type="entry name" value="TF_FadR/GntR_C"/>
</dbReference>
<dbReference type="InterPro" id="IPR000524">
    <property type="entry name" value="Tscrpt_reg_HTH_GntR"/>
</dbReference>
<dbReference type="InterPro" id="IPR023730">
    <property type="entry name" value="Tscrpt_reg_NanR"/>
</dbReference>
<dbReference type="InterPro" id="IPR036388">
    <property type="entry name" value="WH-like_DNA-bd_sf"/>
</dbReference>
<dbReference type="InterPro" id="IPR036390">
    <property type="entry name" value="WH_DNA-bd_sf"/>
</dbReference>
<dbReference type="NCBIfam" id="NF003011">
    <property type="entry name" value="PRK03837.1"/>
    <property type="match status" value="1"/>
</dbReference>
<dbReference type="PANTHER" id="PTHR43537:SF53">
    <property type="entry name" value="HTH-TYPE TRANSCRIPTIONAL REPRESSOR NANR"/>
    <property type="match status" value="1"/>
</dbReference>
<dbReference type="PANTHER" id="PTHR43537">
    <property type="entry name" value="TRANSCRIPTIONAL REGULATOR, GNTR FAMILY"/>
    <property type="match status" value="1"/>
</dbReference>
<dbReference type="Pfam" id="PF07729">
    <property type="entry name" value="FCD"/>
    <property type="match status" value="1"/>
</dbReference>
<dbReference type="Pfam" id="PF00392">
    <property type="entry name" value="GntR"/>
    <property type="match status" value="1"/>
</dbReference>
<dbReference type="PRINTS" id="PR00035">
    <property type="entry name" value="HTHGNTR"/>
</dbReference>
<dbReference type="SMART" id="SM00895">
    <property type="entry name" value="FCD"/>
    <property type="match status" value="1"/>
</dbReference>
<dbReference type="SMART" id="SM00345">
    <property type="entry name" value="HTH_GNTR"/>
    <property type="match status" value="1"/>
</dbReference>
<dbReference type="SUPFAM" id="SSF48008">
    <property type="entry name" value="GntR ligand-binding domain-like"/>
    <property type="match status" value="1"/>
</dbReference>
<dbReference type="SUPFAM" id="SSF46785">
    <property type="entry name" value="Winged helix' DNA-binding domain"/>
    <property type="match status" value="1"/>
</dbReference>
<dbReference type="PROSITE" id="PS50949">
    <property type="entry name" value="HTH_GNTR"/>
    <property type="match status" value="1"/>
</dbReference>
<name>NANR_ECO57</name>
<reference key="1">
    <citation type="journal article" date="2001" name="Nature">
        <title>Genome sequence of enterohaemorrhagic Escherichia coli O157:H7.</title>
        <authorList>
            <person name="Perna N.T."/>
            <person name="Plunkett G. III"/>
            <person name="Burland V."/>
            <person name="Mau B."/>
            <person name="Glasner J.D."/>
            <person name="Rose D.J."/>
            <person name="Mayhew G.F."/>
            <person name="Evans P.S."/>
            <person name="Gregor J."/>
            <person name="Kirkpatrick H.A."/>
            <person name="Posfai G."/>
            <person name="Hackett J."/>
            <person name="Klink S."/>
            <person name="Boutin A."/>
            <person name="Shao Y."/>
            <person name="Miller L."/>
            <person name="Grotbeck E.J."/>
            <person name="Davis N.W."/>
            <person name="Lim A."/>
            <person name="Dimalanta E.T."/>
            <person name="Potamousis K."/>
            <person name="Apodaca J."/>
            <person name="Anantharaman T.S."/>
            <person name="Lin J."/>
            <person name="Yen G."/>
            <person name="Schwartz D.C."/>
            <person name="Welch R.A."/>
            <person name="Blattner F.R."/>
        </authorList>
    </citation>
    <scope>NUCLEOTIDE SEQUENCE [LARGE SCALE GENOMIC DNA]</scope>
    <source>
        <strain>O157:H7 / EDL933 / ATCC 700927 / EHEC</strain>
    </source>
</reference>
<reference key="2">
    <citation type="journal article" date="2001" name="DNA Res.">
        <title>Complete genome sequence of enterohemorrhagic Escherichia coli O157:H7 and genomic comparison with a laboratory strain K-12.</title>
        <authorList>
            <person name="Hayashi T."/>
            <person name="Makino K."/>
            <person name="Ohnishi M."/>
            <person name="Kurokawa K."/>
            <person name="Ishii K."/>
            <person name="Yokoyama K."/>
            <person name="Han C.-G."/>
            <person name="Ohtsubo E."/>
            <person name="Nakayama K."/>
            <person name="Murata T."/>
            <person name="Tanaka M."/>
            <person name="Tobe T."/>
            <person name="Iida T."/>
            <person name="Takami H."/>
            <person name="Honda T."/>
            <person name="Sasakawa C."/>
            <person name="Ogasawara N."/>
            <person name="Yasunaga T."/>
            <person name="Kuhara S."/>
            <person name="Shiba T."/>
            <person name="Hattori M."/>
            <person name="Shinagawa H."/>
        </authorList>
    </citation>
    <scope>NUCLEOTIDE SEQUENCE [LARGE SCALE GENOMIC DNA]</scope>
    <source>
        <strain>O157:H7 / Sakai / RIMD 0509952 / EHEC</strain>
    </source>
</reference>
<feature type="chain" id="PRO_0000050657" description="HTH-type transcriptional repressor NanR">
    <location>
        <begin position="1"/>
        <end position="263"/>
    </location>
</feature>
<feature type="domain" description="HTH gntR-type" evidence="1">
    <location>
        <begin position="30"/>
        <end position="98"/>
    </location>
</feature>
<feature type="DNA-binding region" description="H-T-H motif" evidence="1">
    <location>
        <begin position="58"/>
        <end position="77"/>
    </location>
</feature>
<feature type="region of interest" description="Disordered" evidence="2">
    <location>
        <begin position="1"/>
        <end position="22"/>
    </location>
</feature>
<organism>
    <name type="scientific">Escherichia coli O157:H7</name>
    <dbReference type="NCBI Taxonomy" id="83334"/>
    <lineage>
        <taxon>Bacteria</taxon>
        <taxon>Pseudomonadati</taxon>
        <taxon>Pseudomonadota</taxon>
        <taxon>Gammaproteobacteria</taxon>
        <taxon>Enterobacterales</taxon>
        <taxon>Enterobacteriaceae</taxon>
        <taxon>Escherichia</taxon>
    </lineage>
</organism>